<gene>
    <name type="ordered locus">BQ2027_MB0039</name>
</gene>
<sequence length="202" mass="21808">MVAPHEDPEDHVAPAAQRVRAGTLLLANTDLLEPTFRRSVIYIVEHNDGGTLGVVLNRPSETAVYNVLPQWAKLAAKPKTMFIGGPVKRDAALCLAVLRVGADPEGVPGLRHVAGRLVMVDLDADPEVLAAAVEGVRIYAGYSGWTIGQLEGEIERDDWIVLSALPSDVLVGPRADLWGQVLRRQPLPLSLLATHPIDLSRN</sequence>
<comment type="similarity">
    <text evidence="1">Belongs to the UPF0301 (AlgH) family.</text>
</comment>
<organism>
    <name type="scientific">Mycobacterium bovis (strain ATCC BAA-935 / AF2122/97)</name>
    <dbReference type="NCBI Taxonomy" id="233413"/>
    <lineage>
        <taxon>Bacteria</taxon>
        <taxon>Bacillati</taxon>
        <taxon>Actinomycetota</taxon>
        <taxon>Actinomycetes</taxon>
        <taxon>Mycobacteriales</taxon>
        <taxon>Mycobacteriaceae</taxon>
        <taxon>Mycobacterium</taxon>
        <taxon>Mycobacterium tuberculosis complex</taxon>
    </lineage>
</organism>
<accession>P67758</accession>
<accession>A0A1R3XV96</accession>
<accession>P71608</accession>
<accession>X2BDV3</accession>
<feature type="chain" id="PRO_0000214330" description="UPF0301 protein Mb0039">
    <location>
        <begin position="1"/>
        <end position="202"/>
    </location>
</feature>
<name>Y039_MYCBO</name>
<dbReference type="EMBL" id="LT708304">
    <property type="protein sequence ID" value="SIT98399.1"/>
    <property type="molecule type" value="Genomic_DNA"/>
</dbReference>
<dbReference type="RefSeq" id="NP_853708.1">
    <property type="nucleotide sequence ID" value="NC_002945.3"/>
</dbReference>
<dbReference type="RefSeq" id="WP_003400460.1">
    <property type="nucleotide sequence ID" value="NC_002945.4"/>
</dbReference>
<dbReference type="SMR" id="P67758"/>
<dbReference type="KEGG" id="mbo:BQ2027_MB0039"/>
<dbReference type="PATRIC" id="fig|233413.5.peg.45"/>
<dbReference type="Proteomes" id="UP000001419">
    <property type="component" value="Chromosome"/>
</dbReference>
<dbReference type="GO" id="GO:0005829">
    <property type="term" value="C:cytosol"/>
    <property type="evidence" value="ECO:0007669"/>
    <property type="project" value="TreeGrafter"/>
</dbReference>
<dbReference type="FunFam" id="3.40.1740.10:FF:000002">
    <property type="entry name" value="UPF0301 protein A5636_14805"/>
    <property type="match status" value="1"/>
</dbReference>
<dbReference type="Gene3D" id="3.40.1740.10">
    <property type="entry name" value="VC0467-like"/>
    <property type="match status" value="1"/>
</dbReference>
<dbReference type="HAMAP" id="MF_00758">
    <property type="entry name" value="UPF0301"/>
    <property type="match status" value="1"/>
</dbReference>
<dbReference type="InterPro" id="IPR003774">
    <property type="entry name" value="AlgH-like"/>
</dbReference>
<dbReference type="NCBIfam" id="NF001269">
    <property type="entry name" value="PRK00228.2-1"/>
    <property type="match status" value="1"/>
</dbReference>
<dbReference type="NCBIfam" id="NF001272">
    <property type="entry name" value="PRK00228.2-4"/>
    <property type="match status" value="1"/>
</dbReference>
<dbReference type="PANTHER" id="PTHR30327">
    <property type="entry name" value="UNCHARACTERIZED PROTEIN YQGE"/>
    <property type="match status" value="1"/>
</dbReference>
<dbReference type="PANTHER" id="PTHR30327:SF1">
    <property type="entry name" value="UPF0301 PROTEIN YQGE"/>
    <property type="match status" value="1"/>
</dbReference>
<dbReference type="Pfam" id="PF02622">
    <property type="entry name" value="DUF179"/>
    <property type="match status" value="1"/>
</dbReference>
<dbReference type="SUPFAM" id="SSF143456">
    <property type="entry name" value="VC0467-like"/>
    <property type="match status" value="1"/>
</dbReference>
<protein>
    <recommendedName>
        <fullName>UPF0301 protein Mb0039</fullName>
    </recommendedName>
</protein>
<keyword id="KW-1185">Reference proteome</keyword>
<reference key="1">
    <citation type="journal article" date="2003" name="Proc. Natl. Acad. Sci. U.S.A.">
        <title>The complete genome sequence of Mycobacterium bovis.</title>
        <authorList>
            <person name="Garnier T."/>
            <person name="Eiglmeier K."/>
            <person name="Camus J.-C."/>
            <person name="Medina N."/>
            <person name="Mansoor H."/>
            <person name="Pryor M."/>
            <person name="Duthoy S."/>
            <person name="Grondin S."/>
            <person name="Lacroix C."/>
            <person name="Monsempe C."/>
            <person name="Simon S."/>
            <person name="Harris B."/>
            <person name="Atkin R."/>
            <person name="Doggett J."/>
            <person name="Mayes R."/>
            <person name="Keating L."/>
            <person name="Wheeler P.R."/>
            <person name="Parkhill J."/>
            <person name="Barrell B.G."/>
            <person name="Cole S.T."/>
            <person name="Gordon S.V."/>
            <person name="Hewinson R.G."/>
        </authorList>
    </citation>
    <scope>NUCLEOTIDE SEQUENCE [LARGE SCALE GENOMIC DNA]</scope>
    <source>
        <strain>ATCC BAA-935 / AF2122/97</strain>
    </source>
</reference>
<reference key="2">
    <citation type="journal article" date="2017" name="Genome Announc.">
        <title>Updated reference genome sequence and annotation of Mycobacterium bovis AF2122/97.</title>
        <authorList>
            <person name="Malone K.M."/>
            <person name="Farrell D."/>
            <person name="Stuber T.P."/>
            <person name="Schubert O.T."/>
            <person name="Aebersold R."/>
            <person name="Robbe-Austerman S."/>
            <person name="Gordon S.V."/>
        </authorList>
    </citation>
    <scope>NUCLEOTIDE SEQUENCE [LARGE SCALE GENOMIC DNA]</scope>
    <scope>GENOME REANNOTATION</scope>
    <source>
        <strain>ATCC BAA-935 / AF2122/97</strain>
    </source>
</reference>
<evidence type="ECO:0000305" key="1"/>
<proteinExistence type="inferred from homology"/>